<evidence type="ECO:0000250" key="1"/>
<gene>
    <name type="primary">emp</name>
    <name type="synonym">empbp</name>
    <name type="synonym">ssp</name>
</gene>
<sequence length="340" mass="38484">MKKKLLVLTMSTLFATQLINSNHANASVTESVDKKFVVPESGINKIIPTYNEFKKAPKVNVSNLTDNKNFVASEDKLKKISDPSAASKIVDKNFVVPESKLGNIVPEYKEINNRVNVATNNPASQQVDKHFVAKGPEVNRFITQNKVNHHFITTQTHYKKVITSYKSTHVHKHVNHATDSINKHFIVKPSEAPRYTHPSQSLMINHYFAVPGYHAHKFVTPGHASIKINHFCVVPQINSFKVIPPYGHNSHRMHVPSFQNNTTATHQNAKVNKAYDYKYFYSYKVVKGVKKYFSFSQSNGYKIGKPSLNIKNVNYQYAVPSYSPTNYVPEFKGSLPAPRV</sequence>
<feature type="signal peptide">
    <location>
        <begin position="1"/>
        <end position="26"/>
    </location>
</feature>
<feature type="chain" id="PRO_0000079388" description="Extracellular matrix protein-binding protein emp">
    <location>
        <begin position="27"/>
        <end position="340"/>
    </location>
</feature>
<protein>
    <recommendedName>
        <fullName>Extracellular matrix protein-binding protein emp</fullName>
    </recommendedName>
    <alternativeName>
        <fullName>40 kDa vitronectin-binding cell surface protein</fullName>
    </alternativeName>
</protein>
<comment type="function">
    <text evidence="1">Adhesin that binds to the host cell extracellular matrix proteins fibronectin, fibrinogen, collagen, and vitronectin.</text>
</comment>
<comment type="subcellular location">
    <subcellularLocation>
        <location evidence="1">Cell surface</location>
    </subcellularLocation>
</comment>
<reference key="1">
    <citation type="journal article" date="2001" name="J. Bacteriol.">
        <title>Identification and characterization of a novel 38.5-kilodalton cell surface protein of Staphylococcus aureus with extended-spectrum binding activity for extracellular matrix and plasma proteins.</title>
        <authorList>
            <person name="Hussain M.S."/>
            <person name="Becker K."/>
            <person name="von Eiff C."/>
            <person name="Schrenzel J."/>
            <person name="Peters G."/>
            <person name="Herrmann M."/>
        </authorList>
    </citation>
    <scope>NUCLEOTIDE SEQUENCE [GENOMIC DNA]</scope>
    <source>
        <strain>6850</strain>
    </source>
</reference>
<organism>
    <name type="scientific">Staphylococcus aureus</name>
    <dbReference type="NCBI Taxonomy" id="1280"/>
    <lineage>
        <taxon>Bacteria</taxon>
        <taxon>Bacillati</taxon>
        <taxon>Bacillota</taxon>
        <taxon>Bacilli</taxon>
        <taxon>Bacillales</taxon>
        <taxon>Staphylococcaceae</taxon>
        <taxon>Staphylococcus</taxon>
    </lineage>
</organism>
<accession>P0C6P1</accession>
<accession>P81684</accession>
<accession>Q9K2Q1</accession>
<accession>Q9L3L5</accession>
<dbReference type="EMBL" id="AJ272084">
    <property type="protein sequence ID" value="CAB75985.1"/>
    <property type="molecule type" value="Genomic_DNA"/>
</dbReference>
<dbReference type="GO" id="GO:0009986">
    <property type="term" value="C:cell surface"/>
    <property type="evidence" value="ECO:0007669"/>
    <property type="project" value="UniProtKB-SubCell"/>
</dbReference>
<proteinExistence type="inferred from homology"/>
<keyword id="KW-0732">Signal</keyword>
<name>EMP_STAAU</name>